<dbReference type="EC" id="6.2.1.14" evidence="1"/>
<dbReference type="EMBL" id="BX248358">
    <property type="protein sequence ID" value="CAE49912.1"/>
    <property type="molecule type" value="Genomic_DNA"/>
</dbReference>
<dbReference type="SMR" id="Q6NGW9"/>
<dbReference type="STRING" id="257309.DIP1381"/>
<dbReference type="KEGG" id="cdi:DIP1381"/>
<dbReference type="HOGENOM" id="CLU_076858_0_0_11"/>
<dbReference type="UniPathway" id="UPA00999">
    <property type="reaction ID" value="UER00351"/>
</dbReference>
<dbReference type="Proteomes" id="UP000002198">
    <property type="component" value="Chromosome"/>
</dbReference>
<dbReference type="GO" id="GO:0042410">
    <property type="term" value="F:6-carboxyhexanoate-CoA ligase activity"/>
    <property type="evidence" value="ECO:0007669"/>
    <property type="project" value="UniProtKB-UniRule"/>
</dbReference>
<dbReference type="GO" id="GO:0005524">
    <property type="term" value="F:ATP binding"/>
    <property type="evidence" value="ECO:0007669"/>
    <property type="project" value="UniProtKB-KW"/>
</dbReference>
<dbReference type="GO" id="GO:0000287">
    <property type="term" value="F:magnesium ion binding"/>
    <property type="evidence" value="ECO:0007669"/>
    <property type="project" value="UniProtKB-UniRule"/>
</dbReference>
<dbReference type="GO" id="GO:0009102">
    <property type="term" value="P:biotin biosynthetic process"/>
    <property type="evidence" value="ECO:0007669"/>
    <property type="project" value="UniProtKB-UniRule"/>
</dbReference>
<dbReference type="HAMAP" id="MF_00668">
    <property type="entry name" value="BioW"/>
    <property type="match status" value="1"/>
</dbReference>
<dbReference type="InterPro" id="IPR005499">
    <property type="entry name" value="BioW"/>
</dbReference>
<dbReference type="NCBIfam" id="NF002360">
    <property type="entry name" value="PRK01322.1"/>
    <property type="match status" value="1"/>
</dbReference>
<dbReference type="Pfam" id="PF03744">
    <property type="entry name" value="BioW"/>
    <property type="match status" value="1"/>
</dbReference>
<accession>Q6NGW9</accession>
<proteinExistence type="inferred from homology"/>
<gene>
    <name evidence="1" type="primary">bioW</name>
    <name type="ordered locus">DIP1381</name>
</gene>
<keyword id="KW-0067">ATP-binding</keyword>
<keyword id="KW-0093">Biotin biosynthesis</keyword>
<keyword id="KW-0436">Ligase</keyword>
<keyword id="KW-0460">Magnesium</keyword>
<keyword id="KW-0547">Nucleotide-binding</keyword>
<keyword id="KW-1185">Reference proteome</keyword>
<comment type="function">
    <text evidence="1">Catalyzes the transformation of pimelate into pimeloyl-CoA with concomitant hydrolysis of ATP to AMP.</text>
</comment>
<comment type="catalytic activity">
    <reaction evidence="1">
        <text>heptanedioate + ATP + CoA = 6-carboxyhexanoyl-CoA + AMP + diphosphate</text>
        <dbReference type="Rhea" id="RHEA:14781"/>
        <dbReference type="ChEBI" id="CHEBI:30616"/>
        <dbReference type="ChEBI" id="CHEBI:33019"/>
        <dbReference type="ChEBI" id="CHEBI:36165"/>
        <dbReference type="ChEBI" id="CHEBI:57287"/>
        <dbReference type="ChEBI" id="CHEBI:57360"/>
        <dbReference type="ChEBI" id="CHEBI:456215"/>
        <dbReference type="EC" id="6.2.1.14"/>
    </reaction>
</comment>
<comment type="cofactor">
    <cofactor evidence="1">
        <name>Mg(2+)</name>
        <dbReference type="ChEBI" id="CHEBI:18420"/>
    </cofactor>
</comment>
<comment type="pathway">
    <text evidence="1">Metabolic intermediate metabolism; pimeloyl-CoA biosynthesis; pimeloyl-CoA from pimelate: step 1/1.</text>
</comment>
<comment type="subunit">
    <text evidence="1">Homodimer.</text>
</comment>
<comment type="similarity">
    <text evidence="1">Belongs to the BioW family.</text>
</comment>
<sequence length="247" mass="27073">MLYASYMSYVSIKMHASSNGAHISGAETLVDESRAYEFLSSFYQRANTHSKGKPEITTLTIRRIKDADIITIPALEVKCLPALHPSEAHRQVIEQLSNVVSPTIAQMALHTVLNARNMRGAILLCAHTGQRLDPYDPQRGVRASTFGVTPQESAGPTLNKSHFNEALVLASKVMSAPGIVAEICISDDPAYTTGYVTTENTYIRIPHMKDPYSPIGGRVFLLDTRVSTPEDTISYLEQKPVLITGVN</sequence>
<protein>
    <recommendedName>
        <fullName evidence="1">6-carboxyhexanoate--CoA ligase</fullName>
        <ecNumber evidence="1">6.2.1.14</ecNumber>
    </recommendedName>
    <alternativeName>
        <fullName evidence="1">Pimeloyl-CoA synthase</fullName>
    </alternativeName>
</protein>
<feature type="chain" id="PRO_0000412082" description="6-carboxyhexanoate--CoA ligase">
    <location>
        <begin position="1"/>
        <end position="247"/>
    </location>
</feature>
<reference key="1">
    <citation type="journal article" date="2003" name="Nucleic Acids Res.">
        <title>The complete genome sequence and analysis of Corynebacterium diphtheriae NCTC13129.</title>
        <authorList>
            <person name="Cerdeno-Tarraga A.-M."/>
            <person name="Efstratiou A."/>
            <person name="Dover L.G."/>
            <person name="Holden M.T.G."/>
            <person name="Pallen M.J."/>
            <person name="Bentley S.D."/>
            <person name="Besra G.S."/>
            <person name="Churcher C.M."/>
            <person name="James K.D."/>
            <person name="De Zoysa A."/>
            <person name="Chillingworth T."/>
            <person name="Cronin A."/>
            <person name="Dowd L."/>
            <person name="Feltwell T."/>
            <person name="Hamlin N."/>
            <person name="Holroyd S."/>
            <person name="Jagels K."/>
            <person name="Moule S."/>
            <person name="Quail M.A."/>
            <person name="Rabbinowitsch E."/>
            <person name="Rutherford K.M."/>
            <person name="Thomson N.R."/>
            <person name="Unwin L."/>
            <person name="Whitehead S."/>
            <person name="Barrell B.G."/>
            <person name="Parkhill J."/>
        </authorList>
    </citation>
    <scope>NUCLEOTIDE SEQUENCE [LARGE SCALE GENOMIC DNA]</scope>
    <source>
        <strain>ATCC 700971 / NCTC 13129 / Biotype gravis</strain>
    </source>
</reference>
<name>BIOW_CORDI</name>
<evidence type="ECO:0000255" key="1">
    <source>
        <dbReference type="HAMAP-Rule" id="MF_00668"/>
    </source>
</evidence>
<organism>
    <name type="scientific">Corynebacterium diphtheriae (strain ATCC 700971 / NCTC 13129 / Biotype gravis)</name>
    <dbReference type="NCBI Taxonomy" id="257309"/>
    <lineage>
        <taxon>Bacteria</taxon>
        <taxon>Bacillati</taxon>
        <taxon>Actinomycetota</taxon>
        <taxon>Actinomycetes</taxon>
        <taxon>Mycobacteriales</taxon>
        <taxon>Corynebacteriaceae</taxon>
        <taxon>Corynebacterium</taxon>
    </lineage>
</organism>